<comment type="function">
    <text evidence="1 2">Guanylyltransferase that catalyzes the synthesis of adenosylcobinamide-GDP (AdoCbi-GDP) from adenosylcobinamide-phosphate (AdoCbi-P) and GTP. Is involved in adenosylcobalamin biosynthesis. Binds one GTP per dimer. Cannot use other NTPs or GDP. Does not display AdoCbi kinase activity. Is also able to catalyze the condensation of 2-phospho-L-lactate (LP) with GTP in vitro to form PPi and (2S)-lactyl-2-diphospho-5'-guanosine (LPPG), but is much less efficient than CofC, the presumed enzyme catalyzing this reaction in vivo.</text>
</comment>
<comment type="catalytic activity">
    <reaction evidence="2">
        <text>adenosylcob(III)inamide phosphate + GTP + H(+) = adenosylcob(III)inamide-GDP + diphosphate</text>
        <dbReference type="Rhea" id="RHEA:22712"/>
        <dbReference type="ChEBI" id="CHEBI:15378"/>
        <dbReference type="ChEBI" id="CHEBI:33019"/>
        <dbReference type="ChEBI" id="CHEBI:37565"/>
        <dbReference type="ChEBI" id="CHEBI:58502"/>
        <dbReference type="ChEBI" id="CHEBI:60487"/>
        <dbReference type="EC" id="2.7.7.62"/>
    </reaction>
</comment>
<comment type="biophysicochemical properties">
    <kinetics>
        <KM evidence="1 2">18.4 uM for adenosylcobinamide phosphate</KM>
        <KM evidence="1 2">2.4 uM for GTP</KM>
        <KM evidence="1 2">6 mM for (2S)-2-phospholactate</KM>
        <Vmax evidence="1 2">115.0 nmol/min/mg enzyme with (2S)-2-phospholactate as substrate</Vmax>
    </kinetics>
</comment>
<comment type="pathway">
    <text>Cofactor biosynthesis; adenosylcobalamin biosynthesis.</text>
</comment>
<comment type="subunit">
    <text evidence="2">Homodimer.</text>
</comment>
<comment type="miscellaneous">
    <text>Binds GTP first, before binding AdoCbi-P.</text>
</comment>
<proteinExistence type="evidence at protein level"/>
<evidence type="ECO:0000269" key="1">
    <source>
    </source>
</evidence>
<evidence type="ECO:0000269" key="2">
    <source>
    </source>
</evidence>
<evidence type="ECO:0007829" key="3">
    <source>
        <dbReference type="PDB" id="3RSB"/>
    </source>
</evidence>
<reference key="1">
    <citation type="journal article" date="1996" name="Science">
        <title>Complete genome sequence of the methanogenic archaeon, Methanococcus jannaschii.</title>
        <authorList>
            <person name="Bult C.J."/>
            <person name="White O."/>
            <person name="Olsen G.J."/>
            <person name="Zhou L."/>
            <person name="Fleischmann R.D."/>
            <person name="Sutton G.G."/>
            <person name="Blake J.A."/>
            <person name="FitzGerald L.M."/>
            <person name="Clayton R.A."/>
            <person name="Gocayne J.D."/>
            <person name="Kerlavage A.R."/>
            <person name="Dougherty B.A."/>
            <person name="Tomb J.-F."/>
            <person name="Adams M.D."/>
            <person name="Reich C.I."/>
            <person name="Overbeek R."/>
            <person name="Kirkness E.F."/>
            <person name="Weinstock K.G."/>
            <person name="Merrick J.M."/>
            <person name="Glodek A."/>
            <person name="Scott J.L."/>
            <person name="Geoghagen N.S.M."/>
            <person name="Weidman J.F."/>
            <person name="Fuhrmann J.L."/>
            <person name="Nguyen D."/>
            <person name="Utterback T.R."/>
            <person name="Kelley J.M."/>
            <person name="Peterson J.D."/>
            <person name="Sadow P.W."/>
            <person name="Hanna M.C."/>
            <person name="Cotton M.D."/>
            <person name="Roberts K.M."/>
            <person name="Hurst M.A."/>
            <person name="Kaine B.P."/>
            <person name="Borodovsky M."/>
            <person name="Klenk H.-P."/>
            <person name="Fraser C.M."/>
            <person name="Smith H.O."/>
            <person name="Woese C.R."/>
            <person name="Venter J.C."/>
        </authorList>
    </citation>
    <scope>NUCLEOTIDE SEQUENCE [LARGE SCALE GENOMIC DNA]</scope>
    <source>
        <strain>ATCC 43067 / DSM 2661 / JAL-1 / JCM 10045 / NBRC 100440</strain>
    </source>
</reference>
<reference key="2">
    <citation type="journal article" date="2008" name="Biochemistry">
        <title>Identification and characterization of the 2-phospho-L-lactate guanylyltransferase involved in coenzyme F420 biosynthesis.</title>
        <authorList>
            <person name="Grochowski L.L."/>
            <person name="Xu H."/>
            <person name="White R.H."/>
        </authorList>
    </citation>
    <scope>FUNCTION AS A NUCLEOTIDYLTRANSFERASE</scope>
    <scope>KINETIC PARAMETERS</scope>
    <source>
        <strain>ATCC 43067 / DSM 2661 / JAL-1 / JCM 10045 / NBRC 100440</strain>
    </source>
</reference>
<reference key="3">
    <citation type="journal article" date="2009" name="Biochemistry">
        <title>Biochemical characterization of the GTP:adenosylcobinamide-phosphate guanylyltransferase (CobY) enzyme of the hyperthermophilic archaeon Methanocaldococcus jannaschii.</title>
        <authorList>
            <person name="Otte M.M."/>
            <person name="Escalante-Semerena J.C."/>
        </authorList>
    </citation>
    <scope>FUNCTION IN ADENOSYLCOBALAMIN BIOSYNTHESIS</scope>
    <scope>CATALYTIC ACTIVITY</scope>
    <scope>GTP-BINDING</scope>
    <scope>SUBSTRATE SPECIFICITY</scope>
    <scope>SUBUNIT</scope>
    <scope>ORDER OF SUBSTRATE BINDING</scope>
    <scope>KINETIC PARAMETERS</scope>
</reference>
<protein>
    <recommendedName>
        <fullName>Adenosylcobinamide-phosphate guanylyltransferase</fullName>
        <shortName>AdoCbi-P guanylyltransferase</shortName>
        <ecNumber>2.7.7.62</ecNumber>
    </recommendedName>
</protein>
<feature type="chain" id="PRO_0000107174" description="Adenosylcobinamide-phosphate guanylyltransferase">
    <location>
        <begin position="1"/>
        <end position="196"/>
    </location>
</feature>
<feature type="strand" evidence="3">
    <location>
        <begin position="2"/>
        <end position="7"/>
    </location>
</feature>
<feature type="helix" evidence="3">
    <location>
        <begin position="13"/>
        <end position="16"/>
    </location>
</feature>
<feature type="helix" evidence="3">
    <location>
        <begin position="19"/>
        <end position="21"/>
    </location>
</feature>
<feature type="helix" evidence="3">
    <location>
        <begin position="29"/>
        <end position="38"/>
    </location>
</feature>
<feature type="strand" evidence="3">
    <location>
        <begin position="39"/>
        <end position="41"/>
    </location>
</feature>
<feature type="strand" evidence="3">
    <location>
        <begin position="45"/>
        <end position="49"/>
    </location>
</feature>
<feature type="helix" evidence="3">
    <location>
        <begin position="54"/>
        <end position="63"/>
    </location>
</feature>
<feature type="turn" evidence="3">
    <location>
        <begin position="64"/>
        <end position="68"/>
    </location>
</feature>
<feature type="strand" evidence="3">
    <location>
        <begin position="69"/>
        <end position="72"/>
    </location>
</feature>
<feature type="turn" evidence="3">
    <location>
        <begin position="86"/>
        <end position="90"/>
    </location>
</feature>
<feature type="strand" evidence="3">
    <location>
        <begin position="95"/>
        <end position="99"/>
    </location>
</feature>
<feature type="strand" evidence="3">
    <location>
        <begin position="102"/>
        <end position="104"/>
    </location>
</feature>
<feature type="helix" evidence="3">
    <location>
        <begin position="107"/>
        <end position="121"/>
    </location>
</feature>
<feature type="strand" evidence="3">
    <location>
        <begin position="129"/>
        <end position="135"/>
    </location>
</feature>
<feature type="turn" evidence="3">
    <location>
        <begin position="136"/>
        <end position="138"/>
    </location>
</feature>
<feature type="strand" evidence="3">
    <location>
        <begin position="146"/>
        <end position="157"/>
    </location>
</feature>
<feature type="strand" evidence="3">
    <location>
        <begin position="166"/>
        <end position="170"/>
    </location>
</feature>
<feature type="helix" evidence="3">
    <location>
        <begin position="181"/>
        <end position="189"/>
    </location>
</feature>
<dbReference type="EC" id="2.7.7.62"/>
<dbReference type="EMBL" id="L77117">
    <property type="protein sequence ID" value="AAB99118.1"/>
    <property type="molecule type" value="Genomic_DNA"/>
</dbReference>
<dbReference type="PIR" id="D64439">
    <property type="entry name" value="D64439"/>
</dbReference>
<dbReference type="RefSeq" id="WP_010870628.1">
    <property type="nucleotide sequence ID" value="NC_000909.1"/>
</dbReference>
<dbReference type="PDB" id="2MZB">
    <property type="method" value="NMR"/>
    <property type="chains" value="A=1-196"/>
</dbReference>
<dbReference type="PDB" id="3RSB">
    <property type="method" value="X-ray"/>
    <property type="resolution" value="2.80 A"/>
    <property type="chains" value="A/B/C/D=1-196"/>
</dbReference>
<dbReference type="PDBsum" id="2MZB"/>
<dbReference type="PDBsum" id="3RSB"/>
<dbReference type="BMRB" id="Q58517"/>
<dbReference type="SMR" id="Q58517"/>
<dbReference type="FunCoup" id="Q58517">
    <property type="interactions" value="6"/>
</dbReference>
<dbReference type="STRING" id="243232.MJ_1117"/>
<dbReference type="PaxDb" id="243232-MJ_1117"/>
<dbReference type="EnsemblBacteria" id="AAB99118">
    <property type="protein sequence ID" value="AAB99118"/>
    <property type="gene ID" value="MJ_1117"/>
</dbReference>
<dbReference type="GeneID" id="1452013"/>
<dbReference type="KEGG" id="mja:MJ_1117"/>
<dbReference type="eggNOG" id="arCOG01871">
    <property type="taxonomic scope" value="Archaea"/>
</dbReference>
<dbReference type="HOGENOM" id="CLU_098907_0_0_2"/>
<dbReference type="InParanoid" id="Q58517"/>
<dbReference type="OrthoDB" id="9782at2157"/>
<dbReference type="PhylomeDB" id="Q58517"/>
<dbReference type="BRENDA" id="2.7.7.62">
    <property type="organism ID" value="3260"/>
</dbReference>
<dbReference type="SABIO-RK" id="Q58517"/>
<dbReference type="UniPathway" id="UPA00148"/>
<dbReference type="EvolutionaryTrace" id="Q58517"/>
<dbReference type="PRO" id="PR:Q58517"/>
<dbReference type="Proteomes" id="UP000000805">
    <property type="component" value="Chromosome"/>
</dbReference>
<dbReference type="GO" id="GO:0008820">
    <property type="term" value="F:cobinamide phosphate guanylyltransferase activity"/>
    <property type="evidence" value="ECO:0000314"/>
    <property type="project" value="UniProtKB"/>
</dbReference>
<dbReference type="GO" id="GO:0005525">
    <property type="term" value="F:GTP binding"/>
    <property type="evidence" value="ECO:0000314"/>
    <property type="project" value="UniProtKB"/>
</dbReference>
<dbReference type="GO" id="GO:0016779">
    <property type="term" value="F:nucleotidyltransferase activity"/>
    <property type="evidence" value="ECO:0000318"/>
    <property type="project" value="GO_Central"/>
</dbReference>
<dbReference type="GO" id="GO:0009236">
    <property type="term" value="P:cobalamin biosynthetic process"/>
    <property type="evidence" value="ECO:0000314"/>
    <property type="project" value="UniProtKB"/>
</dbReference>
<dbReference type="Gene3D" id="3.90.550.10">
    <property type="entry name" value="Spore Coat Polysaccharide Biosynthesis Protein SpsA, Chain A"/>
    <property type="match status" value="1"/>
</dbReference>
<dbReference type="InterPro" id="IPR053669">
    <property type="entry name" value="AdoCbi-P_Guanylyltransferase"/>
</dbReference>
<dbReference type="InterPro" id="IPR005245">
    <property type="entry name" value="CHP00454"/>
</dbReference>
<dbReference type="InterPro" id="IPR025877">
    <property type="entry name" value="MobA-like_NTP_Trfase"/>
</dbReference>
<dbReference type="InterPro" id="IPR029044">
    <property type="entry name" value="Nucleotide-diphossugar_trans"/>
</dbReference>
<dbReference type="NCBIfam" id="NF045495">
    <property type="entry name" value="AdoCbiPCobY_Meth"/>
    <property type="match status" value="1"/>
</dbReference>
<dbReference type="NCBIfam" id="TIGR00454">
    <property type="entry name" value="TIGR00454 family protein"/>
    <property type="match status" value="1"/>
</dbReference>
<dbReference type="PANTHER" id="PTHR19136:SF86">
    <property type="entry name" value="ADENOSYLCOBINAMIDE-PHOSPHATE GUANYLYLTRANSFERASE"/>
    <property type="match status" value="1"/>
</dbReference>
<dbReference type="PANTHER" id="PTHR19136">
    <property type="entry name" value="MOLYBDENUM COFACTOR GUANYLYLTRANSFERASE"/>
    <property type="match status" value="1"/>
</dbReference>
<dbReference type="Pfam" id="PF12804">
    <property type="entry name" value="NTP_transf_3"/>
    <property type="match status" value="1"/>
</dbReference>
<dbReference type="SUPFAM" id="SSF53448">
    <property type="entry name" value="Nucleotide-diphospho-sugar transferases"/>
    <property type="match status" value="1"/>
</dbReference>
<sequence length="196" mass="21746">MDALIMAGGKGTRMGGVEKPLIKLCGRCLIDYVVSPLLKSKVNNIFIATSPNTPKTKEYINSAYKDYKNIVVIDTSGKGYIEDLNECIGYFSEPFLVVSSDLINLKSKIINSIVDYFYCIKAKTPDVEALAVMIPKEKYPNPSIDFNGLVPAGINVVSPKHGYQKEEIMVIDELIFNINTKDDLKLAEMLLKKDGL</sequence>
<accession>Q58517</accession>
<organism>
    <name type="scientific">Methanocaldococcus jannaschii (strain ATCC 43067 / DSM 2661 / JAL-1 / JCM 10045 / NBRC 100440)</name>
    <name type="common">Methanococcus jannaschii</name>
    <dbReference type="NCBI Taxonomy" id="243232"/>
    <lineage>
        <taxon>Archaea</taxon>
        <taxon>Methanobacteriati</taxon>
        <taxon>Methanobacteriota</taxon>
        <taxon>Methanomada group</taxon>
        <taxon>Methanococci</taxon>
        <taxon>Methanococcales</taxon>
        <taxon>Methanocaldococcaceae</taxon>
        <taxon>Methanocaldococcus</taxon>
    </lineage>
</organism>
<keyword id="KW-0002">3D-structure</keyword>
<keyword id="KW-0169">Cobalamin biosynthesis</keyword>
<keyword id="KW-0342">GTP-binding</keyword>
<keyword id="KW-0547">Nucleotide-binding</keyword>
<keyword id="KW-0548">Nucleotidyltransferase</keyword>
<keyword id="KW-1185">Reference proteome</keyword>
<keyword id="KW-0808">Transferase</keyword>
<name>COBY_METJA</name>
<gene>
    <name type="primary">cobY</name>
    <name type="ordered locus">MJ1117</name>
</gene>